<organism>
    <name type="scientific">Agrobacterium fabrum (strain C58 / ATCC 33970)</name>
    <name type="common">Agrobacterium tumefaciens (strain C58)</name>
    <dbReference type="NCBI Taxonomy" id="176299"/>
    <lineage>
        <taxon>Bacteria</taxon>
        <taxon>Pseudomonadati</taxon>
        <taxon>Pseudomonadota</taxon>
        <taxon>Alphaproteobacteria</taxon>
        <taxon>Hyphomicrobiales</taxon>
        <taxon>Rhizobiaceae</taxon>
        <taxon>Rhizobium/Agrobacterium group</taxon>
        <taxon>Agrobacterium</taxon>
        <taxon>Agrobacterium tumefaciens complex</taxon>
    </lineage>
</organism>
<feature type="chain" id="PRO_0000196620" description="Putative pyruvate, phosphate dikinase regulatory protein">
    <location>
        <begin position="1"/>
        <end position="273"/>
    </location>
</feature>
<feature type="binding site" evidence="1">
    <location>
        <begin position="153"/>
        <end position="160"/>
    </location>
    <ligand>
        <name>ADP</name>
        <dbReference type="ChEBI" id="CHEBI:456216"/>
    </ligand>
</feature>
<evidence type="ECO:0000255" key="1">
    <source>
        <dbReference type="HAMAP-Rule" id="MF_00921"/>
    </source>
</evidence>
<name>PDRP_AGRFC</name>
<reference key="1">
    <citation type="journal article" date="2001" name="Science">
        <title>The genome of the natural genetic engineer Agrobacterium tumefaciens C58.</title>
        <authorList>
            <person name="Wood D.W."/>
            <person name="Setubal J.C."/>
            <person name="Kaul R."/>
            <person name="Monks D.E."/>
            <person name="Kitajima J.P."/>
            <person name="Okura V.K."/>
            <person name="Zhou Y."/>
            <person name="Chen L."/>
            <person name="Wood G.E."/>
            <person name="Almeida N.F. Jr."/>
            <person name="Woo L."/>
            <person name="Chen Y."/>
            <person name="Paulsen I.T."/>
            <person name="Eisen J.A."/>
            <person name="Karp P.D."/>
            <person name="Bovee D. Sr."/>
            <person name="Chapman P."/>
            <person name="Clendenning J."/>
            <person name="Deatherage G."/>
            <person name="Gillet W."/>
            <person name="Grant C."/>
            <person name="Kutyavin T."/>
            <person name="Levy R."/>
            <person name="Li M.-J."/>
            <person name="McClelland E."/>
            <person name="Palmieri A."/>
            <person name="Raymond C."/>
            <person name="Rouse G."/>
            <person name="Saenphimmachak C."/>
            <person name="Wu Z."/>
            <person name="Romero P."/>
            <person name="Gordon D."/>
            <person name="Zhang S."/>
            <person name="Yoo H."/>
            <person name="Tao Y."/>
            <person name="Biddle P."/>
            <person name="Jung M."/>
            <person name="Krespan W."/>
            <person name="Perry M."/>
            <person name="Gordon-Kamm B."/>
            <person name="Liao L."/>
            <person name="Kim S."/>
            <person name="Hendrick C."/>
            <person name="Zhao Z.-Y."/>
            <person name="Dolan M."/>
            <person name="Chumley F."/>
            <person name="Tingey S.V."/>
            <person name="Tomb J.-F."/>
            <person name="Gordon M.P."/>
            <person name="Olson M.V."/>
            <person name="Nester E.W."/>
        </authorList>
    </citation>
    <scope>NUCLEOTIDE SEQUENCE [LARGE SCALE GENOMIC DNA]</scope>
    <source>
        <strain>C58 / ATCC 33970</strain>
    </source>
</reference>
<reference key="2">
    <citation type="journal article" date="2001" name="Science">
        <title>Genome sequence of the plant pathogen and biotechnology agent Agrobacterium tumefaciens C58.</title>
        <authorList>
            <person name="Goodner B."/>
            <person name="Hinkle G."/>
            <person name="Gattung S."/>
            <person name="Miller N."/>
            <person name="Blanchard M."/>
            <person name="Qurollo B."/>
            <person name="Goldman B.S."/>
            <person name="Cao Y."/>
            <person name="Askenazi M."/>
            <person name="Halling C."/>
            <person name="Mullin L."/>
            <person name="Houmiel K."/>
            <person name="Gordon J."/>
            <person name="Vaudin M."/>
            <person name="Iartchouk O."/>
            <person name="Epp A."/>
            <person name="Liu F."/>
            <person name="Wollam C."/>
            <person name="Allinger M."/>
            <person name="Doughty D."/>
            <person name="Scott C."/>
            <person name="Lappas C."/>
            <person name="Markelz B."/>
            <person name="Flanagan C."/>
            <person name="Crowell C."/>
            <person name="Gurson J."/>
            <person name="Lomo C."/>
            <person name="Sear C."/>
            <person name="Strub G."/>
            <person name="Cielo C."/>
            <person name="Slater S."/>
        </authorList>
    </citation>
    <scope>NUCLEOTIDE SEQUENCE [LARGE SCALE GENOMIC DNA]</scope>
    <source>
        <strain>C58 / ATCC 33970</strain>
    </source>
</reference>
<accession>Q8UJC7</accession>
<keyword id="KW-0418">Kinase</keyword>
<keyword id="KW-0547">Nucleotide-binding</keyword>
<keyword id="KW-1185">Reference proteome</keyword>
<keyword id="KW-0723">Serine/threonine-protein kinase</keyword>
<keyword id="KW-0808">Transferase</keyword>
<protein>
    <recommendedName>
        <fullName evidence="1">Putative pyruvate, phosphate dikinase regulatory protein</fullName>
        <shortName evidence="1">PPDK regulatory protein</shortName>
        <ecNumber evidence="1">2.7.11.32</ecNumber>
        <ecNumber evidence="1">2.7.4.27</ecNumber>
    </recommendedName>
</protein>
<gene>
    <name type="ordered locus">Atu0001</name>
    <name type="ORF">AGR_C_5142</name>
</gene>
<comment type="function">
    <text evidence="1">Bifunctional serine/threonine kinase and phosphorylase involved in the regulation of the pyruvate, phosphate dikinase (PPDK) by catalyzing its phosphorylation/dephosphorylation.</text>
</comment>
<comment type="catalytic activity">
    <reaction evidence="1">
        <text>N(tele)-phospho-L-histidyl/L-threonyl-[pyruvate, phosphate dikinase] + ADP = N(tele)-phospho-L-histidyl/O-phospho-L-threonyl-[pyruvate, phosphate dikinase] + AMP + H(+)</text>
        <dbReference type="Rhea" id="RHEA:43692"/>
        <dbReference type="Rhea" id="RHEA-COMP:10650"/>
        <dbReference type="Rhea" id="RHEA-COMP:10651"/>
        <dbReference type="ChEBI" id="CHEBI:15378"/>
        <dbReference type="ChEBI" id="CHEBI:30013"/>
        <dbReference type="ChEBI" id="CHEBI:61977"/>
        <dbReference type="ChEBI" id="CHEBI:83586"/>
        <dbReference type="ChEBI" id="CHEBI:456215"/>
        <dbReference type="ChEBI" id="CHEBI:456216"/>
        <dbReference type="EC" id="2.7.11.32"/>
    </reaction>
</comment>
<comment type="catalytic activity">
    <reaction evidence="1">
        <text>N(tele)-phospho-L-histidyl/O-phospho-L-threonyl-[pyruvate, phosphate dikinase] + phosphate + H(+) = N(tele)-phospho-L-histidyl/L-threonyl-[pyruvate, phosphate dikinase] + diphosphate</text>
        <dbReference type="Rhea" id="RHEA:43696"/>
        <dbReference type="Rhea" id="RHEA-COMP:10650"/>
        <dbReference type="Rhea" id="RHEA-COMP:10651"/>
        <dbReference type="ChEBI" id="CHEBI:15378"/>
        <dbReference type="ChEBI" id="CHEBI:30013"/>
        <dbReference type="ChEBI" id="CHEBI:33019"/>
        <dbReference type="ChEBI" id="CHEBI:43474"/>
        <dbReference type="ChEBI" id="CHEBI:61977"/>
        <dbReference type="ChEBI" id="CHEBI:83586"/>
        <dbReference type="EC" id="2.7.4.27"/>
    </reaction>
</comment>
<comment type="similarity">
    <text evidence="1">Belongs to the pyruvate, phosphate/water dikinase regulatory protein family. PDRP subfamily.</text>
</comment>
<dbReference type="EC" id="2.7.11.32" evidence="1"/>
<dbReference type="EC" id="2.7.4.27" evidence="1"/>
<dbReference type="EMBL" id="AE007869">
    <property type="protein sequence ID" value="AAK85826.1"/>
    <property type="molecule type" value="Genomic_DNA"/>
</dbReference>
<dbReference type="PIR" id="A97359">
    <property type="entry name" value="A97359"/>
</dbReference>
<dbReference type="PIR" id="AB2577">
    <property type="entry name" value="AB2577"/>
</dbReference>
<dbReference type="RefSeq" id="NP_353041.1">
    <property type="nucleotide sequence ID" value="NC_003062.2"/>
</dbReference>
<dbReference type="RefSeq" id="WP_010970590.1">
    <property type="nucleotide sequence ID" value="NC_003062.2"/>
</dbReference>
<dbReference type="SMR" id="Q8UJC7"/>
<dbReference type="STRING" id="176299.Atu0001"/>
<dbReference type="DNASU" id="1132039"/>
<dbReference type="EnsemblBacteria" id="AAK85826">
    <property type="protein sequence ID" value="AAK85826"/>
    <property type="gene ID" value="Atu0001"/>
</dbReference>
<dbReference type="GeneID" id="1132039"/>
<dbReference type="KEGG" id="atu:Atu0001"/>
<dbReference type="PATRIC" id="fig|176299.10.peg.2"/>
<dbReference type="eggNOG" id="COG1806">
    <property type="taxonomic scope" value="Bacteria"/>
</dbReference>
<dbReference type="HOGENOM" id="CLU_046206_2_0_5"/>
<dbReference type="OrthoDB" id="9782201at2"/>
<dbReference type="PhylomeDB" id="Q8UJC7"/>
<dbReference type="BioCyc" id="AGRO:ATU0001-MONOMER"/>
<dbReference type="Proteomes" id="UP000000813">
    <property type="component" value="Chromosome circular"/>
</dbReference>
<dbReference type="GO" id="GO:0043531">
    <property type="term" value="F:ADP binding"/>
    <property type="evidence" value="ECO:0007669"/>
    <property type="project" value="UniProtKB-UniRule"/>
</dbReference>
<dbReference type="GO" id="GO:0005524">
    <property type="term" value="F:ATP binding"/>
    <property type="evidence" value="ECO:0007669"/>
    <property type="project" value="InterPro"/>
</dbReference>
<dbReference type="GO" id="GO:0016776">
    <property type="term" value="F:phosphotransferase activity, phosphate group as acceptor"/>
    <property type="evidence" value="ECO:0007669"/>
    <property type="project" value="UniProtKB-UniRule"/>
</dbReference>
<dbReference type="GO" id="GO:0004674">
    <property type="term" value="F:protein serine/threonine kinase activity"/>
    <property type="evidence" value="ECO:0007669"/>
    <property type="project" value="UniProtKB-UniRule"/>
</dbReference>
<dbReference type="HAMAP" id="MF_00921">
    <property type="entry name" value="PDRP"/>
    <property type="match status" value="1"/>
</dbReference>
<dbReference type="InterPro" id="IPR005177">
    <property type="entry name" value="Kinase-pyrophosphorylase"/>
</dbReference>
<dbReference type="InterPro" id="IPR026565">
    <property type="entry name" value="PPDK_reg"/>
</dbReference>
<dbReference type="NCBIfam" id="NF003742">
    <property type="entry name" value="PRK05339.1"/>
    <property type="match status" value="1"/>
</dbReference>
<dbReference type="PANTHER" id="PTHR31756">
    <property type="entry name" value="PYRUVATE, PHOSPHATE DIKINASE REGULATORY PROTEIN 1, CHLOROPLASTIC"/>
    <property type="match status" value="1"/>
</dbReference>
<dbReference type="PANTHER" id="PTHR31756:SF3">
    <property type="entry name" value="PYRUVATE, PHOSPHATE DIKINASE REGULATORY PROTEIN 1, CHLOROPLASTIC"/>
    <property type="match status" value="1"/>
</dbReference>
<dbReference type="Pfam" id="PF03618">
    <property type="entry name" value="Kinase-PPPase"/>
    <property type="match status" value="1"/>
</dbReference>
<proteinExistence type="inferred from homology"/>
<sequence length="273" mass="30303">MENKKSFFHLHLISDSTGETLMSAGRAVSAQFHTSMPVEHVYPMIRNQKQLAQVIDLIDKEPGIVLYTIVDQQLAEFLDLRCHAIGVPCVNVLEPIIGIFQTYLGAPSRRRVGAQHALNADYFARIEALNFAMDHDDGQMPETYDDADVVIIGISRTSKTPTSIYLANRGIKTANIPVVPNVPLPESLYAATRPLIVGLVATSDRISQVRENRDLGTTGGFDGGRYTDRATIMEELKYARALCARNNWPLIDVTRRSIEETAAAILALRPRTR</sequence>